<feature type="signal peptide" evidence="2">
    <location>
        <begin position="1"/>
        <end position="29"/>
    </location>
</feature>
<feature type="chain" id="PRO_0000414059" description="Receptor-type tyrosine-protein phosphatase O">
    <location>
        <begin position="30"/>
        <end position="1226"/>
    </location>
</feature>
<feature type="topological domain" description="Extracellular" evidence="2">
    <location>
        <begin position="30"/>
        <end position="832"/>
    </location>
</feature>
<feature type="transmembrane region" description="Helical" evidence="2">
    <location>
        <begin position="833"/>
        <end position="853"/>
    </location>
</feature>
<feature type="topological domain" description="Cytoplasmic" evidence="2">
    <location>
        <begin position="854"/>
        <end position="1226"/>
    </location>
</feature>
<feature type="domain" description="Fibronectin type-III 1" evidence="4">
    <location>
        <begin position="30"/>
        <end position="115"/>
    </location>
</feature>
<feature type="domain" description="Fibronectin type-III 2" evidence="4">
    <location>
        <begin position="339"/>
        <end position="435"/>
    </location>
</feature>
<feature type="domain" description="Fibronectin type-III 3" evidence="4">
    <location>
        <begin position="445"/>
        <end position="541"/>
    </location>
</feature>
<feature type="domain" description="Fibronectin type-III 4" evidence="4">
    <location>
        <begin position="542"/>
        <end position="638"/>
    </location>
</feature>
<feature type="domain" description="Fibronectin type-III 5" evidence="4">
    <location>
        <begin position="641"/>
        <end position="734"/>
    </location>
</feature>
<feature type="domain" description="Fibronectin type-III 6" evidence="4">
    <location>
        <begin position="735"/>
        <end position="827"/>
    </location>
</feature>
<feature type="domain" description="Tyrosine-protein phosphatase" evidence="3">
    <location>
        <begin position="948"/>
        <end position="1205"/>
    </location>
</feature>
<feature type="region of interest" description="Disordered" evidence="6">
    <location>
        <begin position="242"/>
        <end position="305"/>
    </location>
</feature>
<feature type="compositionally biased region" description="Basic and acidic residues" evidence="6">
    <location>
        <begin position="260"/>
        <end position="270"/>
    </location>
</feature>
<feature type="compositionally biased region" description="Low complexity" evidence="6">
    <location>
        <begin position="277"/>
        <end position="291"/>
    </location>
</feature>
<feature type="compositionally biased region" description="Polar residues" evidence="6">
    <location>
        <begin position="296"/>
        <end position="305"/>
    </location>
</feature>
<feature type="active site" description="Phosphocysteine intermediate" evidence="3 5">
    <location>
        <position position="1146"/>
    </location>
</feature>
<feature type="binding site" evidence="1">
    <location>
        <position position="1112"/>
    </location>
    <ligand>
        <name>substrate</name>
    </ligand>
</feature>
<feature type="binding site" evidence="1">
    <location>
        <begin position="1146"/>
        <end position="1152"/>
    </location>
    <ligand>
        <name>substrate</name>
    </ligand>
</feature>
<feature type="binding site" evidence="1">
    <location>
        <position position="1190"/>
    </location>
    <ligand>
        <name>substrate</name>
    </ligand>
</feature>
<feature type="modified residue" description="Phosphoserine" evidence="10 11">
    <location>
        <position position="875"/>
    </location>
</feature>
<feature type="modified residue" description="Phosphotyrosine" evidence="8">
    <location>
        <position position="1220"/>
    </location>
</feature>
<feature type="glycosylation site" description="N-linked (GlcNAc...) asparagine" evidence="2">
    <location>
        <position position="75"/>
    </location>
</feature>
<feature type="glycosylation site" description="N-linked (GlcNAc...) asparagine" evidence="2">
    <location>
        <position position="154"/>
    </location>
</feature>
<feature type="glycosylation site" description="N-linked (GlcNAc...) asparagine" evidence="2">
    <location>
        <position position="227"/>
    </location>
</feature>
<feature type="glycosylation site" description="N-linked (GlcNAc...) asparagine" evidence="2">
    <location>
        <position position="279"/>
    </location>
</feature>
<feature type="glycosylation site" description="N-linked (GlcNAc...) asparagine" evidence="2">
    <location>
        <position position="471"/>
    </location>
</feature>
<feature type="glycosylation site" description="N-linked (GlcNAc...) asparagine" evidence="2">
    <location>
        <position position="500"/>
    </location>
</feature>
<feature type="glycosylation site" description="N-linked (GlcNAc...) asparagine" evidence="2">
    <location>
        <position position="710"/>
    </location>
</feature>
<feature type="glycosylation site" description="N-linked (GlcNAc...) asparagine" evidence="2">
    <location>
        <position position="743"/>
    </location>
</feature>
<feature type="glycosylation site" description="N-linked (GlcNAc...) asparagine" evidence="2">
    <location>
        <position position="800"/>
    </location>
</feature>
<feature type="mutagenesis site" description="Loss of tyrosine phosphorylation. Abolishes interaction with FYN and GRB2." evidence="8">
    <original>Y</original>
    <variation>F</variation>
    <location>
        <position position="1220"/>
    </location>
</feature>
<feature type="sequence conflict" description="In Ref. 2; AAH52743." evidence="9" ref="2">
    <original>Y</original>
    <variation>H</variation>
    <location>
        <position position="1184"/>
    </location>
</feature>
<keyword id="KW-0325">Glycoprotein</keyword>
<keyword id="KW-0378">Hydrolase</keyword>
<keyword id="KW-0472">Membrane</keyword>
<keyword id="KW-0597">Phosphoprotein</keyword>
<keyword id="KW-0904">Protein phosphatase</keyword>
<keyword id="KW-0675">Receptor</keyword>
<keyword id="KW-1185">Reference proteome</keyword>
<keyword id="KW-0677">Repeat</keyword>
<keyword id="KW-0732">Signal</keyword>
<keyword id="KW-0812">Transmembrane</keyword>
<keyword id="KW-1133">Transmembrane helix</keyword>
<dbReference type="EC" id="3.1.3.48"/>
<dbReference type="EMBL" id="AC093120">
    <property type="status" value="NOT_ANNOTATED_CDS"/>
    <property type="molecule type" value="Genomic_DNA"/>
</dbReference>
<dbReference type="EMBL" id="AC144767">
    <property type="status" value="NOT_ANNOTATED_CDS"/>
    <property type="molecule type" value="Genomic_DNA"/>
</dbReference>
<dbReference type="EMBL" id="AC163627">
    <property type="status" value="NOT_ANNOTATED_CDS"/>
    <property type="molecule type" value="Genomic_DNA"/>
</dbReference>
<dbReference type="EMBL" id="BC052743">
    <property type="protein sequence ID" value="AAH52743.1"/>
    <property type="molecule type" value="mRNA"/>
</dbReference>
<dbReference type="CCDS" id="CCDS20664.1"/>
<dbReference type="RefSeq" id="NP_035346.3">
    <property type="nucleotide sequence ID" value="NM_011216.3"/>
</dbReference>
<dbReference type="SMR" id="E9Q612"/>
<dbReference type="BioGRID" id="202505">
    <property type="interactions" value="2"/>
</dbReference>
<dbReference type="FunCoup" id="E9Q612">
    <property type="interactions" value="283"/>
</dbReference>
<dbReference type="IntAct" id="E9Q612">
    <property type="interactions" value="1"/>
</dbReference>
<dbReference type="MINT" id="E9Q612"/>
<dbReference type="STRING" id="10090.ENSMUSP00000076364"/>
<dbReference type="GlyConnect" id="2674">
    <property type="glycosylation" value="2 N-Linked glycans (1 site)"/>
</dbReference>
<dbReference type="GlyCosmos" id="E9Q612">
    <property type="glycosylation" value="10 sites, 2 glycans"/>
</dbReference>
<dbReference type="GlyGen" id="E9Q612">
    <property type="glycosylation" value="12 sites, 5 N-linked glycans (4 sites)"/>
</dbReference>
<dbReference type="iPTMnet" id="E9Q612"/>
<dbReference type="PhosphoSitePlus" id="E9Q612"/>
<dbReference type="jPOST" id="E9Q612"/>
<dbReference type="PaxDb" id="10090-ENSMUSP00000076364"/>
<dbReference type="ProteomicsDB" id="301949"/>
<dbReference type="Antibodypedia" id="23718">
    <property type="antibodies" value="90 antibodies from 22 providers"/>
</dbReference>
<dbReference type="DNASU" id="19277"/>
<dbReference type="Ensembl" id="ENSMUST00000077115.13">
    <property type="protein sequence ID" value="ENSMUSP00000076364.7"/>
    <property type="gene ID" value="ENSMUSG00000030223.15"/>
</dbReference>
<dbReference type="GeneID" id="19277"/>
<dbReference type="KEGG" id="mmu:19277"/>
<dbReference type="UCSC" id="uc009emv.2">
    <property type="organism name" value="mouse"/>
</dbReference>
<dbReference type="AGR" id="MGI:1097152"/>
<dbReference type="CTD" id="5800"/>
<dbReference type="MGI" id="MGI:1097152">
    <property type="gene designation" value="Ptpro"/>
</dbReference>
<dbReference type="VEuPathDB" id="HostDB:ENSMUSG00000030223"/>
<dbReference type="eggNOG" id="KOG0791">
    <property type="taxonomic scope" value="Eukaryota"/>
</dbReference>
<dbReference type="GeneTree" id="ENSGT00940000154814"/>
<dbReference type="HOGENOM" id="CLU_007724_0_0_1"/>
<dbReference type="InParanoid" id="E9Q612"/>
<dbReference type="OMA" id="TISFITX"/>
<dbReference type="PhylomeDB" id="E9Q612"/>
<dbReference type="TreeFam" id="TF351926"/>
<dbReference type="BioGRID-ORCS" id="19277">
    <property type="hits" value="2 hits in 72 CRISPR screens"/>
</dbReference>
<dbReference type="PRO" id="PR:E9Q612"/>
<dbReference type="Proteomes" id="UP000000589">
    <property type="component" value="Chromosome 6"/>
</dbReference>
<dbReference type="RNAct" id="E9Q612">
    <property type="molecule type" value="protein"/>
</dbReference>
<dbReference type="Bgee" id="ENSMUSG00000030223">
    <property type="expression patterns" value="Expressed in cortical plate and 190 other cell types or tissues"/>
</dbReference>
<dbReference type="ExpressionAtlas" id="E9Q612">
    <property type="expression patterns" value="baseline and differential"/>
</dbReference>
<dbReference type="GO" id="GO:0016324">
    <property type="term" value="C:apical plasma membrane"/>
    <property type="evidence" value="ECO:0000314"/>
    <property type="project" value="UniProtKB"/>
</dbReference>
<dbReference type="GO" id="GO:0043197">
    <property type="term" value="C:dendritic spine"/>
    <property type="evidence" value="ECO:0000314"/>
    <property type="project" value="UniProtKB"/>
</dbReference>
<dbReference type="GO" id="GO:0098982">
    <property type="term" value="C:GABA-ergic synapse"/>
    <property type="evidence" value="ECO:0000314"/>
    <property type="project" value="SynGO"/>
</dbReference>
<dbReference type="GO" id="GO:0098978">
    <property type="term" value="C:glutamatergic synapse"/>
    <property type="evidence" value="ECO:0000314"/>
    <property type="project" value="SynGO"/>
</dbReference>
<dbReference type="GO" id="GO:0016328">
    <property type="term" value="C:lateral plasma membrane"/>
    <property type="evidence" value="ECO:0000314"/>
    <property type="project" value="UniProtKB"/>
</dbReference>
<dbReference type="GO" id="GO:0005886">
    <property type="term" value="C:plasma membrane"/>
    <property type="evidence" value="ECO:0000314"/>
    <property type="project" value="UniProtKB"/>
</dbReference>
<dbReference type="GO" id="GO:0098839">
    <property type="term" value="C:postsynaptic density membrane"/>
    <property type="evidence" value="ECO:0000314"/>
    <property type="project" value="SynGO"/>
</dbReference>
<dbReference type="GO" id="GO:0045296">
    <property type="term" value="F:cadherin binding"/>
    <property type="evidence" value="ECO:0007669"/>
    <property type="project" value="Ensembl"/>
</dbReference>
<dbReference type="GO" id="GO:0042803">
    <property type="term" value="F:protein homodimerization activity"/>
    <property type="evidence" value="ECO:0000314"/>
    <property type="project" value="UniProtKB"/>
</dbReference>
<dbReference type="GO" id="GO:0004725">
    <property type="term" value="F:protein tyrosine phosphatase activity"/>
    <property type="evidence" value="ECO:0000314"/>
    <property type="project" value="UniProtKB"/>
</dbReference>
<dbReference type="GO" id="GO:0017147">
    <property type="term" value="F:Wnt-protein binding"/>
    <property type="evidence" value="ECO:0000314"/>
    <property type="project" value="UniProtKB"/>
</dbReference>
<dbReference type="GO" id="GO:0007411">
    <property type="term" value="P:axon guidance"/>
    <property type="evidence" value="ECO:0000315"/>
    <property type="project" value="UniProtKB"/>
</dbReference>
<dbReference type="GO" id="GO:0000902">
    <property type="term" value="P:cell morphogenesis"/>
    <property type="evidence" value="ECO:0000315"/>
    <property type="project" value="UniProtKB"/>
</dbReference>
<dbReference type="GO" id="GO:0032835">
    <property type="term" value="P:glomerulus development"/>
    <property type="evidence" value="ECO:0000250"/>
    <property type="project" value="UniProtKB"/>
</dbReference>
<dbReference type="GO" id="GO:0030032">
    <property type="term" value="P:lamellipodium assembly"/>
    <property type="evidence" value="ECO:0000315"/>
    <property type="project" value="UniProtKB"/>
</dbReference>
<dbReference type="GO" id="GO:0002548">
    <property type="term" value="P:monocyte chemotaxis"/>
    <property type="evidence" value="ECO:0000250"/>
    <property type="project" value="UniProtKB"/>
</dbReference>
<dbReference type="GO" id="GO:0090090">
    <property type="term" value="P:negative regulation of canonical Wnt signaling pathway"/>
    <property type="evidence" value="ECO:0000314"/>
    <property type="project" value="UniProtKB"/>
</dbReference>
<dbReference type="GO" id="GO:0003105">
    <property type="term" value="P:negative regulation of glomerular filtration"/>
    <property type="evidence" value="ECO:0000250"/>
    <property type="project" value="UniProtKB"/>
</dbReference>
<dbReference type="GO" id="GO:1990264">
    <property type="term" value="P:peptidyl-tyrosine dephosphorylation involved in inactivation of protein kinase activity"/>
    <property type="evidence" value="ECO:0000314"/>
    <property type="project" value="CACAO"/>
</dbReference>
<dbReference type="GO" id="GO:0072112">
    <property type="term" value="P:podocyte differentiation"/>
    <property type="evidence" value="ECO:0000315"/>
    <property type="project" value="UniProtKB"/>
</dbReference>
<dbReference type="GO" id="GO:0003093">
    <property type="term" value="P:regulation of glomerular filtration"/>
    <property type="evidence" value="ECO:0000315"/>
    <property type="project" value="UniProtKB"/>
</dbReference>
<dbReference type="GO" id="GO:0050807">
    <property type="term" value="P:regulation of synapse organization"/>
    <property type="evidence" value="ECO:0000314"/>
    <property type="project" value="SynGO"/>
</dbReference>
<dbReference type="GO" id="GO:0036060">
    <property type="term" value="P:slit diaphragm assembly"/>
    <property type="evidence" value="ECO:0000315"/>
    <property type="project" value="UniProtKB"/>
</dbReference>
<dbReference type="CDD" id="cd00063">
    <property type="entry name" value="FN3"/>
    <property type="match status" value="3"/>
</dbReference>
<dbReference type="CDD" id="cd14614">
    <property type="entry name" value="R-PTPc-O"/>
    <property type="match status" value="1"/>
</dbReference>
<dbReference type="FunFam" id="2.60.40.10:FF:000488">
    <property type="entry name" value="receptor-type tyrosine-protein phosphatase O isoform X1"/>
    <property type="match status" value="1"/>
</dbReference>
<dbReference type="FunFam" id="3.90.190.10:FF:000039">
    <property type="entry name" value="receptor-type tyrosine-protein phosphatase O isoform X1"/>
    <property type="match status" value="1"/>
</dbReference>
<dbReference type="FunFam" id="2.60.40.10:FF:000415">
    <property type="entry name" value="receptor-type tyrosine-protein phosphatase O isoform X2"/>
    <property type="match status" value="1"/>
</dbReference>
<dbReference type="Gene3D" id="2.60.40.10">
    <property type="entry name" value="Immunoglobulins"/>
    <property type="match status" value="3"/>
</dbReference>
<dbReference type="Gene3D" id="3.90.190.10">
    <property type="entry name" value="Protein tyrosine phosphatase superfamily"/>
    <property type="match status" value="1"/>
</dbReference>
<dbReference type="InterPro" id="IPR003961">
    <property type="entry name" value="FN3_dom"/>
</dbReference>
<dbReference type="InterPro" id="IPR036116">
    <property type="entry name" value="FN3_sf"/>
</dbReference>
<dbReference type="InterPro" id="IPR013783">
    <property type="entry name" value="Ig-like_fold"/>
</dbReference>
<dbReference type="InterPro" id="IPR029021">
    <property type="entry name" value="Prot-tyrosine_phosphatase-like"/>
</dbReference>
<dbReference type="InterPro" id="IPR000242">
    <property type="entry name" value="PTP_cat"/>
</dbReference>
<dbReference type="InterPro" id="IPR042996">
    <property type="entry name" value="PTPRO"/>
</dbReference>
<dbReference type="InterPro" id="IPR016130">
    <property type="entry name" value="Tyr_Pase_AS"/>
</dbReference>
<dbReference type="InterPro" id="IPR003595">
    <property type="entry name" value="Tyr_Pase_cat"/>
</dbReference>
<dbReference type="InterPro" id="IPR000387">
    <property type="entry name" value="Tyr_Pase_dom"/>
</dbReference>
<dbReference type="PANTHER" id="PTHR47028">
    <property type="entry name" value="RECEPTOR-TYPE TYROSINE-PROTEIN PHOSPHATASE O"/>
    <property type="match status" value="1"/>
</dbReference>
<dbReference type="PANTHER" id="PTHR47028:SF1">
    <property type="entry name" value="RECEPTOR-TYPE TYROSINE-PROTEIN PHOSPHATASE O"/>
    <property type="match status" value="1"/>
</dbReference>
<dbReference type="Pfam" id="PF00041">
    <property type="entry name" value="fn3"/>
    <property type="match status" value="2"/>
</dbReference>
<dbReference type="Pfam" id="PF00102">
    <property type="entry name" value="Y_phosphatase"/>
    <property type="match status" value="1"/>
</dbReference>
<dbReference type="PRINTS" id="PR00700">
    <property type="entry name" value="PRTYPHPHTASE"/>
</dbReference>
<dbReference type="SMART" id="SM00060">
    <property type="entry name" value="FN3"/>
    <property type="match status" value="4"/>
</dbReference>
<dbReference type="SMART" id="SM00194">
    <property type="entry name" value="PTPc"/>
    <property type="match status" value="1"/>
</dbReference>
<dbReference type="SMART" id="SM00404">
    <property type="entry name" value="PTPc_motif"/>
    <property type="match status" value="1"/>
</dbReference>
<dbReference type="SUPFAM" id="SSF52799">
    <property type="entry name" value="(Phosphotyrosine protein) phosphatases II"/>
    <property type="match status" value="1"/>
</dbReference>
<dbReference type="SUPFAM" id="SSF49265">
    <property type="entry name" value="Fibronectin type III"/>
    <property type="match status" value="3"/>
</dbReference>
<dbReference type="PROSITE" id="PS50853">
    <property type="entry name" value="FN3"/>
    <property type="match status" value="5"/>
</dbReference>
<dbReference type="PROSITE" id="PS00383">
    <property type="entry name" value="TYR_PHOSPHATASE_1"/>
    <property type="match status" value="1"/>
</dbReference>
<dbReference type="PROSITE" id="PS50056">
    <property type="entry name" value="TYR_PHOSPHATASE_2"/>
    <property type="match status" value="1"/>
</dbReference>
<dbReference type="PROSITE" id="PS50055">
    <property type="entry name" value="TYR_PHOSPHATASE_PTP"/>
    <property type="match status" value="1"/>
</dbReference>
<evidence type="ECO:0000250" key="1"/>
<evidence type="ECO:0000255" key="2"/>
<evidence type="ECO:0000255" key="3">
    <source>
        <dbReference type="PROSITE-ProRule" id="PRU00160"/>
    </source>
</evidence>
<evidence type="ECO:0000255" key="4">
    <source>
        <dbReference type="PROSITE-ProRule" id="PRU00316"/>
    </source>
</evidence>
<evidence type="ECO:0000255" key="5">
    <source>
        <dbReference type="PROSITE-ProRule" id="PRU10044"/>
    </source>
</evidence>
<evidence type="ECO:0000256" key="6">
    <source>
        <dbReference type="SAM" id="MobiDB-lite"/>
    </source>
</evidence>
<evidence type="ECO:0000269" key="7">
    <source>
    </source>
</evidence>
<evidence type="ECO:0000269" key="8">
    <source>
    </source>
</evidence>
<evidence type="ECO:0000305" key="9"/>
<evidence type="ECO:0007744" key="10">
    <source>
    </source>
</evidence>
<evidence type="ECO:0007744" key="11">
    <source>
    </source>
</evidence>
<name>PTPRO_MOUSE</name>
<comment type="function">
    <text evidence="7">Possesses tyrosine phosphatase activity. Plays a role in regulating the glomerular pressure/filtration rate relationship through an effect on podocyte structure and function.</text>
</comment>
<comment type="catalytic activity">
    <reaction evidence="5">
        <text>O-phospho-L-tyrosyl-[protein] + H2O = L-tyrosyl-[protein] + phosphate</text>
        <dbReference type="Rhea" id="RHEA:10684"/>
        <dbReference type="Rhea" id="RHEA-COMP:10136"/>
        <dbReference type="Rhea" id="RHEA-COMP:20101"/>
        <dbReference type="ChEBI" id="CHEBI:15377"/>
        <dbReference type="ChEBI" id="CHEBI:43474"/>
        <dbReference type="ChEBI" id="CHEBI:46858"/>
        <dbReference type="ChEBI" id="CHEBI:61978"/>
        <dbReference type="EC" id="3.1.3.48"/>
    </reaction>
</comment>
<comment type="subunit">
    <text evidence="8">Interacts (phosphorylated form) with FYN and GRB2.</text>
</comment>
<comment type="interaction">
    <interactant intactId="EBI-8183885">
        <id>E9Q612</id>
    </interactant>
    <interactant intactId="EBI-2899665">
        <id>P27467</id>
        <label>Wnt3a</label>
    </interactant>
    <organismsDiffer>false</organismsDiffer>
    <experiments>2</experiments>
</comment>
<comment type="subcellular location">
    <subcellularLocation>
        <location evidence="1">Membrane</location>
        <topology evidence="1">Single-pass type I membrane protein</topology>
    </subcellularLocation>
</comment>
<comment type="disruption phenotype">
    <text evidence="7">Modification of podocyte structure such that the normal octopoid podocyte is simplified to a more amoeboid structure and that the foot processes are shorter and broader than normal. These changes are associated with altered distribution of the podocyte intermediate cytoskeletal protein vimentin/VIM. Mutant animals have a reduced glomerular filtration rate and reduced glomerular nephrin (NPHS1) content. However, there is no evidence of proteinuria. After removal of one or more kidneys, Ptpro-null animals have higher blood pressure than does their wild-type littermates.</text>
</comment>
<comment type="similarity">
    <text evidence="9">Belongs to the protein-tyrosine phosphatase family. Receptor class 3 subfamily.</text>
</comment>
<organism>
    <name type="scientific">Mus musculus</name>
    <name type="common">Mouse</name>
    <dbReference type="NCBI Taxonomy" id="10090"/>
    <lineage>
        <taxon>Eukaryota</taxon>
        <taxon>Metazoa</taxon>
        <taxon>Chordata</taxon>
        <taxon>Craniata</taxon>
        <taxon>Vertebrata</taxon>
        <taxon>Euteleostomi</taxon>
        <taxon>Mammalia</taxon>
        <taxon>Eutheria</taxon>
        <taxon>Euarchontoglires</taxon>
        <taxon>Glires</taxon>
        <taxon>Rodentia</taxon>
        <taxon>Myomorpha</taxon>
        <taxon>Muroidea</taxon>
        <taxon>Muridae</taxon>
        <taxon>Murinae</taxon>
        <taxon>Mus</taxon>
        <taxon>Mus</taxon>
    </lineage>
</organism>
<gene>
    <name type="primary">Ptpro</name>
    <name type="synonym">GLEPP1</name>
    <name type="synonym">Ptpn15</name>
    <name type="synonym">PTPU2</name>
</gene>
<accession>E9Q612</accession>
<accession>Q7TSY7</accession>
<sequence>MGHLPRGTLGGRRLLPLLGLFVLLKIVTTFHVAVQDDNNIVVSLEASDIVSPASVYVVRVAGESKNYFFEFEEFNSTLPPPVVFKATYHGLYYIITLVVVNGNVVTKPSRSITVLTKPLPVTSVSIYDYKPSPETGVLFEIHYPEKYNVFSRVNISYWEGRDFRTMLYKDFFKGKTVFNHWLPGLCYSNITFQLVSEATFNKSTLVEYSGVSHEPKQHRTAPYPPRNISVRFVNLNKNNWEEPSGSFPEDSFIKPPQDSIGRDRRFHFPEETPETPPSNVSSGSPPSNVSSAWPDPNSTDYESTSQPFWWDSASAAPENEEDFVSALPADYDTETTLDRTEKPTADPFSAFPVQMTLSWLPPKPPTAFDGFNILIEREENFTDYLTVDEEAHEFVAELKEPGKYKLSVTTFSSSGACETRKSQSAKSLSFYISPTGEWIEELTEKPQHVSVHVLSSTTALMSWTSSQENYNSTIVSVVSLTCQKQKESQRLEKQYCTQVNSSKPVIENLVPGAQYQVVMYLRKGPLIGPPSDPVTFAIVPTGIKDLMLYPLGPTAVVLSWTRPILGVFRKYVVEMFYFNPTTMTSEWTTYYEIAATVSLTASVRIASLLPAWYYNFRVTMVTWGDPELSCCDSSTISFITAPVAPEITSVEYFNSLLYISWTYGDATTDLSHSRMLHWMVVAEGRKKIKKSVTRNVMTAILSLPPGDIYNLSVTACTERGSNTSLPRLVKLEPAPPKSLFAVNKTQTSVTLLWVEEGVADFFEVFCQQLGSGHNGKLQEPVAVSSHVVTISSLLPATAYNCSVTSFSHDTPSVPTFIAVSTMVTEVNPNVVVISVLAILSTLLIGLLLVTLVILRKKHLQMARECGAGTFVNFASLEREGKLPYSWRRSVFALLTLLPSCLWTDYLLAFYINPWSKNGLKKRKLTNPVQLDDFDSYIKDMAKDSDYKFSLQFEELKLIGLDIPHFAADLPLNRCKNRYTNILPYDFSRVRLVSMNEEEGADYINANYIPGYNSPQEYIATQGPLPETRNDFWKMVLQQKSHIIVMLTQCNEKRRVKCDHYWPFTEEPIAYGDITVEMVSEEEEEDWASRHFRINYADEAQDVMHFNYTAWPDHGVPPANAAESILQFVFTVRQQAAKSKGPMIIHCSAGVGRTGTFIALDRLLQHIRDHEFVDILGLVSEMRSYRMSMVQTEEQYIFIHQCVQLMWLRKKQQFCISDVIYENVSKS</sequence>
<proteinExistence type="evidence at protein level"/>
<protein>
    <recommendedName>
        <fullName>Receptor-type tyrosine-protein phosphatase O</fullName>
        <shortName>R-PTP-O</shortName>
        <ecNumber>3.1.3.48</ecNumber>
    </recommendedName>
    <alternativeName>
        <fullName>Glomerular epithelial protein 1</fullName>
    </alternativeName>
    <alternativeName>
        <fullName>Protein tyrosine phosphatase U2</fullName>
        <shortName>PTP-U2</shortName>
        <shortName>PTPase U2</shortName>
    </alternativeName>
</protein>
<reference key="1">
    <citation type="journal article" date="2009" name="PLoS Biol.">
        <title>Lineage-specific biology revealed by a finished genome assembly of the mouse.</title>
        <authorList>
            <person name="Church D.M."/>
            <person name="Goodstadt L."/>
            <person name="Hillier L.W."/>
            <person name="Zody M.C."/>
            <person name="Goldstein S."/>
            <person name="She X."/>
            <person name="Bult C.J."/>
            <person name="Agarwala R."/>
            <person name="Cherry J.L."/>
            <person name="DiCuccio M."/>
            <person name="Hlavina W."/>
            <person name="Kapustin Y."/>
            <person name="Meric P."/>
            <person name="Maglott D."/>
            <person name="Birtle Z."/>
            <person name="Marques A.C."/>
            <person name="Graves T."/>
            <person name="Zhou S."/>
            <person name="Teague B."/>
            <person name="Potamousis K."/>
            <person name="Churas C."/>
            <person name="Place M."/>
            <person name="Herschleb J."/>
            <person name="Runnheim R."/>
            <person name="Forrest D."/>
            <person name="Amos-Landgraf J."/>
            <person name="Schwartz D.C."/>
            <person name="Cheng Z."/>
            <person name="Lindblad-Toh K."/>
            <person name="Eichler E.E."/>
            <person name="Ponting C.P."/>
        </authorList>
    </citation>
    <scope>NUCLEOTIDE SEQUENCE [LARGE SCALE GENOMIC DNA]</scope>
    <source>
        <strain>C57BL/6J</strain>
    </source>
</reference>
<reference key="2">
    <citation type="journal article" date="2004" name="Genome Res.">
        <title>The status, quality, and expansion of the NIH full-length cDNA project: the Mammalian Gene Collection (MGC).</title>
        <authorList>
            <consortium name="The MGC Project Team"/>
        </authorList>
    </citation>
    <scope>NUCLEOTIDE SEQUENCE [LARGE SCALE MRNA]</scope>
</reference>
<reference key="3">
    <citation type="journal article" date="2000" name="J. Clin. Invest.">
        <title>Altered podocyte structure in GLEPP1 (Ptpro)-deficient mice associated with hypertension and low glomerular filtration rate.</title>
        <authorList>
            <person name="Wharram B.L."/>
            <person name="Goyal M."/>
            <person name="Gillespie P.J."/>
            <person name="Wiggins J.E."/>
            <person name="Kershaw D.B."/>
            <person name="Holzman L.B."/>
            <person name="Dysko R.C."/>
            <person name="Saunders T.L."/>
            <person name="Samuelson L.C."/>
            <person name="Wiggins R.C."/>
        </authorList>
    </citation>
    <scope>FUNCTION</scope>
    <scope>DISRUPTION PHENOTYPE</scope>
</reference>
<reference key="4">
    <citation type="journal article" date="2009" name="Immunity">
        <title>The phagosomal proteome in interferon-gamma-activated macrophages.</title>
        <authorList>
            <person name="Trost M."/>
            <person name="English L."/>
            <person name="Lemieux S."/>
            <person name="Courcelles M."/>
            <person name="Desjardins M."/>
            <person name="Thibault P."/>
        </authorList>
    </citation>
    <scope>PHOSPHORYLATION [LARGE SCALE ANALYSIS] AT SER-875</scope>
    <scope>IDENTIFICATION BY MASS SPECTROMETRY [LARGE SCALE ANALYSIS]</scope>
</reference>
<reference key="5">
    <citation type="journal article" date="2010" name="Cell">
        <title>A tissue-specific atlas of mouse protein phosphorylation and expression.</title>
        <authorList>
            <person name="Huttlin E.L."/>
            <person name="Jedrychowski M.P."/>
            <person name="Elias J.E."/>
            <person name="Goswami T."/>
            <person name="Rad R."/>
            <person name="Beausoleil S.A."/>
            <person name="Villen J."/>
            <person name="Haas W."/>
            <person name="Sowa M.E."/>
            <person name="Gygi S.P."/>
        </authorList>
    </citation>
    <scope>PHOSPHORYLATION [LARGE SCALE ANALYSIS] AT SER-875</scope>
    <scope>IDENTIFICATION BY MASS SPECTROMETRY [LARGE SCALE ANALYSIS]</scope>
    <source>
        <tissue>Kidney</tissue>
    </source>
</reference>
<reference key="6">
    <citation type="journal article" date="2010" name="Genes Cells">
        <title>Tyrosine phosphorylation of R3 subtype receptor-type protein tyrosine phosphatases and their complex formations with Grb2 or Fyn.</title>
        <authorList>
            <person name="Murata Y."/>
            <person name="Mori M."/>
            <person name="Kotani T."/>
            <person name="Supriatna Y."/>
            <person name="Okazawa H."/>
            <person name="Kusakari S."/>
            <person name="Saito Y."/>
            <person name="Ohnishi H."/>
            <person name="Matozaki T."/>
        </authorList>
    </citation>
    <scope>INTERACTION WITH FYN AND GRB2</scope>
    <scope>PHOSPHORYLATION AT TYR-1220</scope>
    <scope>MUTAGENESIS OF TYR-1220</scope>
</reference>